<protein>
    <recommendedName>
        <fullName evidence="1">Probable transaldolase 1</fullName>
        <ecNumber evidence="1">2.2.1.2</ecNumber>
    </recommendedName>
</protein>
<keyword id="KW-0963">Cytoplasm</keyword>
<keyword id="KW-0570">Pentose shunt</keyword>
<keyword id="KW-1185">Reference proteome</keyword>
<keyword id="KW-0704">Schiff base</keyword>
<keyword id="KW-0808">Transferase</keyword>
<reference key="1">
    <citation type="journal article" date="2003" name="Nature">
        <title>The genome sequence of Bacillus anthracis Ames and comparison to closely related bacteria.</title>
        <authorList>
            <person name="Read T.D."/>
            <person name="Peterson S.N."/>
            <person name="Tourasse N.J."/>
            <person name="Baillie L.W."/>
            <person name="Paulsen I.T."/>
            <person name="Nelson K.E."/>
            <person name="Tettelin H."/>
            <person name="Fouts D.E."/>
            <person name="Eisen J.A."/>
            <person name="Gill S.R."/>
            <person name="Holtzapple E.K."/>
            <person name="Okstad O.A."/>
            <person name="Helgason E."/>
            <person name="Rilstone J."/>
            <person name="Wu M."/>
            <person name="Kolonay J.F."/>
            <person name="Beanan M.J."/>
            <person name="Dodson R.J."/>
            <person name="Brinkac L.M."/>
            <person name="Gwinn M.L."/>
            <person name="DeBoy R.T."/>
            <person name="Madpu R."/>
            <person name="Daugherty S.C."/>
            <person name="Durkin A.S."/>
            <person name="Haft D.H."/>
            <person name="Nelson W.C."/>
            <person name="Peterson J.D."/>
            <person name="Pop M."/>
            <person name="Khouri H.M."/>
            <person name="Radune D."/>
            <person name="Benton J.L."/>
            <person name="Mahamoud Y."/>
            <person name="Jiang L."/>
            <person name="Hance I.R."/>
            <person name="Weidman J.F."/>
            <person name="Berry K.J."/>
            <person name="Plaut R.D."/>
            <person name="Wolf A.M."/>
            <person name="Watkins K.L."/>
            <person name="Nierman W.C."/>
            <person name="Hazen A."/>
            <person name="Cline R.T."/>
            <person name="Redmond C."/>
            <person name="Thwaite J.E."/>
            <person name="White O."/>
            <person name="Salzberg S.L."/>
            <person name="Thomason B."/>
            <person name="Friedlander A.M."/>
            <person name="Koehler T.M."/>
            <person name="Hanna P.C."/>
            <person name="Kolstoe A.-B."/>
            <person name="Fraser C.M."/>
        </authorList>
    </citation>
    <scope>NUCLEOTIDE SEQUENCE [LARGE SCALE GENOMIC DNA]</scope>
    <source>
        <strain>Ames / isolate Porton</strain>
    </source>
</reference>
<reference key="2">
    <citation type="journal article" date="2009" name="J. Bacteriol.">
        <title>The complete genome sequence of Bacillus anthracis Ames 'Ancestor'.</title>
        <authorList>
            <person name="Ravel J."/>
            <person name="Jiang L."/>
            <person name="Stanley S.T."/>
            <person name="Wilson M.R."/>
            <person name="Decker R.S."/>
            <person name="Read T.D."/>
            <person name="Worsham P."/>
            <person name="Keim P.S."/>
            <person name="Salzberg S.L."/>
            <person name="Fraser-Liggett C.M."/>
            <person name="Rasko D.A."/>
        </authorList>
    </citation>
    <scope>NUCLEOTIDE SEQUENCE [LARGE SCALE GENOMIC DNA]</scope>
    <source>
        <strain>Ames ancestor</strain>
    </source>
</reference>
<reference key="3">
    <citation type="submission" date="2004-01" db="EMBL/GenBank/DDBJ databases">
        <title>Complete genome sequence of Bacillus anthracis Sterne.</title>
        <authorList>
            <person name="Brettin T.S."/>
            <person name="Bruce D."/>
            <person name="Challacombe J.F."/>
            <person name="Gilna P."/>
            <person name="Han C."/>
            <person name="Hill K."/>
            <person name="Hitchcock P."/>
            <person name="Jackson P."/>
            <person name="Keim P."/>
            <person name="Longmire J."/>
            <person name="Lucas S."/>
            <person name="Okinaka R."/>
            <person name="Richardson P."/>
            <person name="Rubin E."/>
            <person name="Tice H."/>
        </authorList>
    </citation>
    <scope>NUCLEOTIDE SEQUENCE [LARGE SCALE GENOMIC DNA]</scope>
    <source>
        <strain>Sterne</strain>
    </source>
</reference>
<organism>
    <name type="scientific">Bacillus anthracis</name>
    <dbReference type="NCBI Taxonomy" id="1392"/>
    <lineage>
        <taxon>Bacteria</taxon>
        <taxon>Bacillati</taxon>
        <taxon>Bacillota</taxon>
        <taxon>Bacilli</taxon>
        <taxon>Bacillales</taxon>
        <taxon>Bacillaceae</taxon>
        <taxon>Bacillus</taxon>
        <taxon>Bacillus cereus group</taxon>
    </lineage>
</organism>
<dbReference type="EC" id="2.2.1.2" evidence="1"/>
<dbReference type="EMBL" id="AE016879">
    <property type="protein sequence ID" value="AAP24684.1"/>
    <property type="molecule type" value="Genomic_DNA"/>
</dbReference>
<dbReference type="EMBL" id="AE017334">
    <property type="protein sequence ID" value="AAT29775.1"/>
    <property type="molecule type" value="Genomic_DNA"/>
</dbReference>
<dbReference type="EMBL" id="AE017225">
    <property type="protein sequence ID" value="AAT52965.1"/>
    <property type="molecule type" value="Genomic_DNA"/>
</dbReference>
<dbReference type="RefSeq" id="NP_843198.1">
    <property type="nucleotide sequence ID" value="NC_003997.3"/>
</dbReference>
<dbReference type="RefSeq" id="YP_026914.1">
    <property type="nucleotide sequence ID" value="NC_005945.1"/>
</dbReference>
<dbReference type="SMR" id="Q81V33"/>
<dbReference type="IntAct" id="Q81V33">
    <property type="interactions" value="1"/>
</dbReference>
<dbReference type="STRING" id="261594.GBAA_0670"/>
<dbReference type="DNASU" id="1083931"/>
<dbReference type="KEGG" id="ban:BA_0670"/>
<dbReference type="KEGG" id="bar:GBAA_0670"/>
<dbReference type="KEGG" id="bat:BAS0637"/>
<dbReference type="PATRIC" id="fig|198094.11.peg.670"/>
<dbReference type="eggNOG" id="COG0176">
    <property type="taxonomic scope" value="Bacteria"/>
</dbReference>
<dbReference type="HOGENOM" id="CLU_079764_0_0_9"/>
<dbReference type="OMA" id="VRHPMHV"/>
<dbReference type="OrthoDB" id="9807051at2"/>
<dbReference type="UniPathway" id="UPA00115">
    <property type="reaction ID" value="UER00414"/>
</dbReference>
<dbReference type="Proteomes" id="UP000000427">
    <property type="component" value="Chromosome"/>
</dbReference>
<dbReference type="Proteomes" id="UP000000594">
    <property type="component" value="Chromosome"/>
</dbReference>
<dbReference type="GO" id="GO:0005737">
    <property type="term" value="C:cytoplasm"/>
    <property type="evidence" value="ECO:0007669"/>
    <property type="project" value="UniProtKB-SubCell"/>
</dbReference>
<dbReference type="GO" id="GO:0016832">
    <property type="term" value="F:aldehyde-lyase activity"/>
    <property type="evidence" value="ECO:0007669"/>
    <property type="project" value="InterPro"/>
</dbReference>
<dbReference type="GO" id="GO:0004801">
    <property type="term" value="F:transaldolase activity"/>
    <property type="evidence" value="ECO:0007669"/>
    <property type="project" value="UniProtKB-UniRule"/>
</dbReference>
<dbReference type="GO" id="GO:0005975">
    <property type="term" value="P:carbohydrate metabolic process"/>
    <property type="evidence" value="ECO:0007669"/>
    <property type="project" value="InterPro"/>
</dbReference>
<dbReference type="GO" id="GO:0006098">
    <property type="term" value="P:pentose-phosphate shunt"/>
    <property type="evidence" value="ECO:0007669"/>
    <property type="project" value="UniProtKB-UniRule"/>
</dbReference>
<dbReference type="CDD" id="cd00956">
    <property type="entry name" value="Transaldolase_FSA"/>
    <property type="match status" value="1"/>
</dbReference>
<dbReference type="FunFam" id="3.20.20.70:FF:000018">
    <property type="entry name" value="Probable transaldolase"/>
    <property type="match status" value="1"/>
</dbReference>
<dbReference type="Gene3D" id="3.20.20.70">
    <property type="entry name" value="Aldolase class I"/>
    <property type="match status" value="1"/>
</dbReference>
<dbReference type="HAMAP" id="MF_00494">
    <property type="entry name" value="Transaldolase_3b"/>
    <property type="match status" value="1"/>
</dbReference>
<dbReference type="InterPro" id="IPR013785">
    <property type="entry name" value="Aldolase_TIM"/>
</dbReference>
<dbReference type="InterPro" id="IPR001585">
    <property type="entry name" value="TAL/FSA"/>
</dbReference>
<dbReference type="InterPro" id="IPR022999">
    <property type="entry name" value="Transaldolase_3B"/>
</dbReference>
<dbReference type="InterPro" id="IPR004731">
    <property type="entry name" value="Transaldolase_3B/F6P_aldolase"/>
</dbReference>
<dbReference type="InterPro" id="IPR018225">
    <property type="entry name" value="Transaldolase_AS"/>
</dbReference>
<dbReference type="InterPro" id="IPR033919">
    <property type="entry name" value="TSA/FSA_arc/bac"/>
</dbReference>
<dbReference type="NCBIfam" id="TIGR00875">
    <property type="entry name" value="fsa_talC_mipB"/>
    <property type="match status" value="1"/>
</dbReference>
<dbReference type="PANTHER" id="PTHR10683">
    <property type="entry name" value="TRANSALDOLASE"/>
    <property type="match status" value="1"/>
</dbReference>
<dbReference type="PANTHER" id="PTHR10683:SF36">
    <property type="entry name" value="TRANSALDOLASE"/>
    <property type="match status" value="1"/>
</dbReference>
<dbReference type="Pfam" id="PF00923">
    <property type="entry name" value="TAL_FSA"/>
    <property type="match status" value="1"/>
</dbReference>
<dbReference type="SUPFAM" id="SSF51569">
    <property type="entry name" value="Aldolase"/>
    <property type="match status" value="1"/>
</dbReference>
<dbReference type="PROSITE" id="PS01054">
    <property type="entry name" value="TRANSALDOLASE_1"/>
    <property type="match status" value="1"/>
</dbReference>
<dbReference type="PROSITE" id="PS00958">
    <property type="entry name" value="TRANSALDOLASE_2"/>
    <property type="match status" value="1"/>
</dbReference>
<feature type="chain" id="PRO_0000173653" description="Probable transaldolase 1">
    <location>
        <begin position="1"/>
        <end position="215"/>
    </location>
</feature>
<feature type="active site" description="Schiff-base intermediate with substrate" evidence="1">
    <location>
        <position position="83"/>
    </location>
</feature>
<evidence type="ECO:0000255" key="1">
    <source>
        <dbReference type="HAMAP-Rule" id="MF_00494"/>
    </source>
</evidence>
<proteinExistence type="inferred from homology"/>
<sequence>MKFFIDTANINEIKEANALGVLAGVTTNPSLVAKEGVDFHERIREICNVVEGPVSAEVISLEADKMIEEGKELAKIAPNVVVKVPMTTEGLKAVKAFSDLGIRTNVTLVFSAVQALLAARAGATYVSPFLGRLDDIGHNGMDLIRQIAEIFAIHGIETEIIAASVRHSVHVTDAALNGAHIATIPANVIASLVKHPLTDQGIEKFLADWEKTQEK</sequence>
<accession>Q81V33</accession>
<accession>Q6I3B6</accession>
<accession>Q6KX33</accession>
<comment type="function">
    <text evidence="1">Transaldolase is important for the balance of metabolites in the pentose-phosphate pathway.</text>
</comment>
<comment type="catalytic activity">
    <reaction evidence="1">
        <text>D-sedoheptulose 7-phosphate + D-glyceraldehyde 3-phosphate = D-erythrose 4-phosphate + beta-D-fructose 6-phosphate</text>
        <dbReference type="Rhea" id="RHEA:17053"/>
        <dbReference type="ChEBI" id="CHEBI:16897"/>
        <dbReference type="ChEBI" id="CHEBI:57483"/>
        <dbReference type="ChEBI" id="CHEBI:57634"/>
        <dbReference type="ChEBI" id="CHEBI:59776"/>
        <dbReference type="EC" id="2.2.1.2"/>
    </reaction>
</comment>
<comment type="pathway">
    <text evidence="1">Carbohydrate degradation; pentose phosphate pathway; D-glyceraldehyde 3-phosphate and beta-D-fructose 6-phosphate from D-ribose 5-phosphate and D-xylulose 5-phosphate (non-oxidative stage): step 2/3.</text>
</comment>
<comment type="subcellular location">
    <subcellularLocation>
        <location evidence="1">Cytoplasm</location>
    </subcellularLocation>
</comment>
<comment type="similarity">
    <text evidence="1">Belongs to the transaldolase family. Type 3B subfamily.</text>
</comment>
<name>TAL1_BACAN</name>
<gene>
    <name evidence="1" type="primary">tal1</name>
    <name type="ordered locus">BA_0670</name>
    <name type="ordered locus">GBAA_0670</name>
    <name type="ordered locus">BAS0637</name>
</gene>